<proteinExistence type="inferred from homology"/>
<name>LEUD_ALBFT</name>
<comment type="function">
    <text evidence="1">Catalyzes the isomerization between 2-isopropylmalate and 3-isopropylmalate, via the formation of 2-isopropylmaleate.</text>
</comment>
<comment type="catalytic activity">
    <reaction evidence="1">
        <text>(2R,3S)-3-isopropylmalate = (2S)-2-isopropylmalate</text>
        <dbReference type="Rhea" id="RHEA:32287"/>
        <dbReference type="ChEBI" id="CHEBI:1178"/>
        <dbReference type="ChEBI" id="CHEBI:35121"/>
        <dbReference type="EC" id="4.2.1.33"/>
    </reaction>
</comment>
<comment type="pathway">
    <text evidence="1">Amino-acid biosynthesis; L-leucine biosynthesis; L-leucine from 3-methyl-2-oxobutanoate: step 2/4.</text>
</comment>
<comment type="subunit">
    <text evidence="1">Heterodimer of LeuC and LeuD.</text>
</comment>
<comment type="similarity">
    <text evidence="1">Belongs to the LeuD family. LeuD type 1 subfamily.</text>
</comment>
<accession>Q21XI0</accession>
<feature type="chain" id="PRO_1000063814" description="3-isopropylmalate dehydratase small subunit">
    <location>
        <begin position="1"/>
        <end position="216"/>
    </location>
</feature>
<protein>
    <recommendedName>
        <fullName evidence="1">3-isopropylmalate dehydratase small subunit</fullName>
        <ecNumber evidence="1">4.2.1.33</ecNumber>
    </recommendedName>
    <alternativeName>
        <fullName evidence="1">Alpha-IPM isomerase</fullName>
        <shortName evidence="1">IPMI</shortName>
    </alternativeName>
    <alternativeName>
        <fullName evidence="1">Isopropylmalate isomerase</fullName>
    </alternativeName>
</protein>
<dbReference type="EC" id="4.2.1.33" evidence="1"/>
<dbReference type="EMBL" id="CP000267">
    <property type="protein sequence ID" value="ABD69523.1"/>
    <property type="molecule type" value="Genomic_DNA"/>
</dbReference>
<dbReference type="RefSeq" id="WP_011464091.1">
    <property type="nucleotide sequence ID" value="NC_007908.1"/>
</dbReference>
<dbReference type="SMR" id="Q21XI0"/>
<dbReference type="STRING" id="338969.Rfer_1794"/>
<dbReference type="KEGG" id="rfr:Rfer_1794"/>
<dbReference type="eggNOG" id="COG0066">
    <property type="taxonomic scope" value="Bacteria"/>
</dbReference>
<dbReference type="HOGENOM" id="CLU_081378_0_3_4"/>
<dbReference type="OrthoDB" id="9777465at2"/>
<dbReference type="UniPathway" id="UPA00048">
    <property type="reaction ID" value="UER00071"/>
</dbReference>
<dbReference type="Proteomes" id="UP000008332">
    <property type="component" value="Chromosome"/>
</dbReference>
<dbReference type="GO" id="GO:0009316">
    <property type="term" value="C:3-isopropylmalate dehydratase complex"/>
    <property type="evidence" value="ECO:0007669"/>
    <property type="project" value="InterPro"/>
</dbReference>
<dbReference type="GO" id="GO:0003861">
    <property type="term" value="F:3-isopropylmalate dehydratase activity"/>
    <property type="evidence" value="ECO:0007669"/>
    <property type="project" value="UniProtKB-UniRule"/>
</dbReference>
<dbReference type="GO" id="GO:0009098">
    <property type="term" value="P:L-leucine biosynthetic process"/>
    <property type="evidence" value="ECO:0007669"/>
    <property type="project" value="UniProtKB-UniRule"/>
</dbReference>
<dbReference type="CDD" id="cd01577">
    <property type="entry name" value="IPMI_Swivel"/>
    <property type="match status" value="1"/>
</dbReference>
<dbReference type="FunFam" id="3.20.19.10:FF:000003">
    <property type="entry name" value="3-isopropylmalate dehydratase small subunit"/>
    <property type="match status" value="1"/>
</dbReference>
<dbReference type="Gene3D" id="3.20.19.10">
    <property type="entry name" value="Aconitase, domain 4"/>
    <property type="match status" value="1"/>
</dbReference>
<dbReference type="HAMAP" id="MF_01031">
    <property type="entry name" value="LeuD_type1"/>
    <property type="match status" value="1"/>
</dbReference>
<dbReference type="InterPro" id="IPR004431">
    <property type="entry name" value="3-IsopropMal_deHydase_ssu"/>
</dbReference>
<dbReference type="InterPro" id="IPR015928">
    <property type="entry name" value="Aconitase/3IPM_dehydase_swvl"/>
</dbReference>
<dbReference type="InterPro" id="IPR000573">
    <property type="entry name" value="AconitaseA/IPMdHydase_ssu_swvl"/>
</dbReference>
<dbReference type="InterPro" id="IPR033940">
    <property type="entry name" value="IPMI_Swivel"/>
</dbReference>
<dbReference type="InterPro" id="IPR050075">
    <property type="entry name" value="LeuD"/>
</dbReference>
<dbReference type="NCBIfam" id="TIGR00171">
    <property type="entry name" value="leuD"/>
    <property type="match status" value="1"/>
</dbReference>
<dbReference type="NCBIfam" id="NF002458">
    <property type="entry name" value="PRK01641.1"/>
    <property type="match status" value="1"/>
</dbReference>
<dbReference type="PANTHER" id="PTHR43345:SF5">
    <property type="entry name" value="3-ISOPROPYLMALATE DEHYDRATASE SMALL SUBUNIT"/>
    <property type="match status" value="1"/>
</dbReference>
<dbReference type="PANTHER" id="PTHR43345">
    <property type="entry name" value="3-ISOPROPYLMALATE DEHYDRATASE SMALL SUBUNIT 2-RELATED-RELATED"/>
    <property type="match status" value="1"/>
</dbReference>
<dbReference type="Pfam" id="PF00694">
    <property type="entry name" value="Aconitase_C"/>
    <property type="match status" value="1"/>
</dbReference>
<dbReference type="SUPFAM" id="SSF52016">
    <property type="entry name" value="LeuD/IlvD-like"/>
    <property type="match status" value="1"/>
</dbReference>
<reference key="1">
    <citation type="submission" date="2006-02" db="EMBL/GenBank/DDBJ databases">
        <title>Complete sequence of chromosome of Rhodoferax ferrireducens DSM 15236.</title>
        <authorList>
            <person name="Copeland A."/>
            <person name="Lucas S."/>
            <person name="Lapidus A."/>
            <person name="Barry K."/>
            <person name="Detter J.C."/>
            <person name="Glavina del Rio T."/>
            <person name="Hammon N."/>
            <person name="Israni S."/>
            <person name="Pitluck S."/>
            <person name="Brettin T."/>
            <person name="Bruce D."/>
            <person name="Han C."/>
            <person name="Tapia R."/>
            <person name="Gilna P."/>
            <person name="Kiss H."/>
            <person name="Schmutz J."/>
            <person name="Larimer F."/>
            <person name="Land M."/>
            <person name="Kyrpides N."/>
            <person name="Ivanova N."/>
            <person name="Richardson P."/>
        </authorList>
    </citation>
    <scope>NUCLEOTIDE SEQUENCE [LARGE SCALE GENOMIC DNA]</scope>
    <source>
        <strain>ATCC BAA-621 / DSM 15236 / T118</strain>
    </source>
</reference>
<keyword id="KW-0028">Amino-acid biosynthesis</keyword>
<keyword id="KW-0100">Branched-chain amino acid biosynthesis</keyword>
<keyword id="KW-0432">Leucine biosynthesis</keyword>
<keyword id="KW-0456">Lyase</keyword>
<keyword id="KW-1185">Reference proteome</keyword>
<sequence>MQKFTLLKGLVAPMDRENVDTDAIIPKQFLKSIRKTGFGQNLFDEWRYLDAGFPGQDPKSRKPNPDFVLNQPRYQGASILLARKNFGCGSSREHAPWALDQYGFRAIIAPSYADIFFNNSFKNGLLPIVLSEIQVSQLFDEAAAFPGYALTIDLERQVIIKPDGKELPFEVQAFRKYCLLNGFDDIGLTLRQADKIKAFEAQRLAQKPWLARTLLA</sequence>
<organism>
    <name type="scientific">Albidiferax ferrireducens (strain ATCC BAA-621 / DSM 15236 / T118)</name>
    <name type="common">Rhodoferax ferrireducens</name>
    <dbReference type="NCBI Taxonomy" id="338969"/>
    <lineage>
        <taxon>Bacteria</taxon>
        <taxon>Pseudomonadati</taxon>
        <taxon>Pseudomonadota</taxon>
        <taxon>Betaproteobacteria</taxon>
        <taxon>Burkholderiales</taxon>
        <taxon>Comamonadaceae</taxon>
        <taxon>Rhodoferax</taxon>
    </lineage>
</organism>
<gene>
    <name evidence="1" type="primary">leuD</name>
    <name type="ordered locus">Rfer_1794</name>
</gene>
<evidence type="ECO:0000255" key="1">
    <source>
        <dbReference type="HAMAP-Rule" id="MF_01031"/>
    </source>
</evidence>